<proteinExistence type="inferred from homology"/>
<evidence type="ECO:0000255" key="1">
    <source>
        <dbReference type="HAMAP-Rule" id="MF_01309"/>
    </source>
</evidence>
<evidence type="ECO:0000305" key="2"/>
<gene>
    <name evidence="1" type="primary">rpsC</name>
    <name type="ordered locus">YpsIP31758_3909</name>
</gene>
<protein>
    <recommendedName>
        <fullName evidence="1">Small ribosomal subunit protein uS3</fullName>
    </recommendedName>
    <alternativeName>
        <fullName evidence="2">30S ribosomal protein S3</fullName>
    </alternativeName>
</protein>
<organism>
    <name type="scientific">Yersinia pseudotuberculosis serotype O:1b (strain IP 31758)</name>
    <dbReference type="NCBI Taxonomy" id="349747"/>
    <lineage>
        <taxon>Bacteria</taxon>
        <taxon>Pseudomonadati</taxon>
        <taxon>Pseudomonadota</taxon>
        <taxon>Gammaproteobacteria</taxon>
        <taxon>Enterobacterales</taxon>
        <taxon>Yersiniaceae</taxon>
        <taxon>Yersinia</taxon>
    </lineage>
</organism>
<dbReference type="EMBL" id="CP000720">
    <property type="protein sequence ID" value="ABS48489.1"/>
    <property type="molecule type" value="Genomic_DNA"/>
</dbReference>
<dbReference type="RefSeq" id="WP_002221644.1">
    <property type="nucleotide sequence ID" value="NC_009708.1"/>
</dbReference>
<dbReference type="SMR" id="A7FNM9"/>
<dbReference type="GeneID" id="97454237"/>
<dbReference type="KEGG" id="ypi:YpsIP31758_3909"/>
<dbReference type="HOGENOM" id="CLU_058591_0_2_6"/>
<dbReference type="Proteomes" id="UP000002412">
    <property type="component" value="Chromosome"/>
</dbReference>
<dbReference type="GO" id="GO:0022627">
    <property type="term" value="C:cytosolic small ribosomal subunit"/>
    <property type="evidence" value="ECO:0007669"/>
    <property type="project" value="TreeGrafter"/>
</dbReference>
<dbReference type="GO" id="GO:0003729">
    <property type="term" value="F:mRNA binding"/>
    <property type="evidence" value="ECO:0007669"/>
    <property type="project" value="UniProtKB-UniRule"/>
</dbReference>
<dbReference type="GO" id="GO:0019843">
    <property type="term" value="F:rRNA binding"/>
    <property type="evidence" value="ECO:0007669"/>
    <property type="project" value="UniProtKB-UniRule"/>
</dbReference>
<dbReference type="GO" id="GO:0003735">
    <property type="term" value="F:structural constituent of ribosome"/>
    <property type="evidence" value="ECO:0007669"/>
    <property type="project" value="InterPro"/>
</dbReference>
<dbReference type="GO" id="GO:0006412">
    <property type="term" value="P:translation"/>
    <property type="evidence" value="ECO:0007669"/>
    <property type="project" value="UniProtKB-UniRule"/>
</dbReference>
<dbReference type="CDD" id="cd02412">
    <property type="entry name" value="KH-II_30S_S3"/>
    <property type="match status" value="1"/>
</dbReference>
<dbReference type="FunFam" id="3.30.1140.32:FF:000001">
    <property type="entry name" value="30S ribosomal protein S3"/>
    <property type="match status" value="1"/>
</dbReference>
<dbReference type="FunFam" id="3.30.300.20:FF:000001">
    <property type="entry name" value="30S ribosomal protein S3"/>
    <property type="match status" value="1"/>
</dbReference>
<dbReference type="Gene3D" id="3.30.300.20">
    <property type="match status" value="1"/>
</dbReference>
<dbReference type="Gene3D" id="3.30.1140.32">
    <property type="entry name" value="Ribosomal protein S3, C-terminal domain"/>
    <property type="match status" value="1"/>
</dbReference>
<dbReference type="HAMAP" id="MF_01309_B">
    <property type="entry name" value="Ribosomal_uS3_B"/>
    <property type="match status" value="1"/>
</dbReference>
<dbReference type="InterPro" id="IPR004087">
    <property type="entry name" value="KH_dom"/>
</dbReference>
<dbReference type="InterPro" id="IPR015946">
    <property type="entry name" value="KH_dom-like_a/b"/>
</dbReference>
<dbReference type="InterPro" id="IPR004044">
    <property type="entry name" value="KH_dom_type_2"/>
</dbReference>
<dbReference type="InterPro" id="IPR009019">
    <property type="entry name" value="KH_sf_prok-type"/>
</dbReference>
<dbReference type="InterPro" id="IPR036419">
    <property type="entry name" value="Ribosomal_S3_C_sf"/>
</dbReference>
<dbReference type="InterPro" id="IPR005704">
    <property type="entry name" value="Ribosomal_uS3_bac-typ"/>
</dbReference>
<dbReference type="InterPro" id="IPR001351">
    <property type="entry name" value="Ribosomal_uS3_C"/>
</dbReference>
<dbReference type="InterPro" id="IPR018280">
    <property type="entry name" value="Ribosomal_uS3_CS"/>
</dbReference>
<dbReference type="NCBIfam" id="TIGR01009">
    <property type="entry name" value="rpsC_bact"/>
    <property type="match status" value="1"/>
</dbReference>
<dbReference type="PANTHER" id="PTHR11760">
    <property type="entry name" value="30S/40S RIBOSOMAL PROTEIN S3"/>
    <property type="match status" value="1"/>
</dbReference>
<dbReference type="PANTHER" id="PTHR11760:SF19">
    <property type="entry name" value="SMALL RIBOSOMAL SUBUNIT PROTEIN US3C"/>
    <property type="match status" value="1"/>
</dbReference>
<dbReference type="Pfam" id="PF07650">
    <property type="entry name" value="KH_2"/>
    <property type="match status" value="1"/>
</dbReference>
<dbReference type="Pfam" id="PF00189">
    <property type="entry name" value="Ribosomal_S3_C"/>
    <property type="match status" value="1"/>
</dbReference>
<dbReference type="SMART" id="SM00322">
    <property type="entry name" value="KH"/>
    <property type="match status" value="1"/>
</dbReference>
<dbReference type="SUPFAM" id="SSF54814">
    <property type="entry name" value="Prokaryotic type KH domain (KH-domain type II)"/>
    <property type="match status" value="1"/>
</dbReference>
<dbReference type="SUPFAM" id="SSF54821">
    <property type="entry name" value="Ribosomal protein S3 C-terminal domain"/>
    <property type="match status" value="1"/>
</dbReference>
<dbReference type="PROSITE" id="PS50823">
    <property type="entry name" value="KH_TYPE_2"/>
    <property type="match status" value="1"/>
</dbReference>
<dbReference type="PROSITE" id="PS00548">
    <property type="entry name" value="RIBOSOMAL_S3"/>
    <property type="match status" value="1"/>
</dbReference>
<accession>A7FNM9</accession>
<comment type="function">
    <text evidence="1">Binds the lower part of the 30S subunit head. Binds mRNA in the 70S ribosome, positioning it for translation.</text>
</comment>
<comment type="subunit">
    <text evidence="1">Part of the 30S ribosomal subunit. Forms a tight complex with proteins S10 and S14.</text>
</comment>
<comment type="similarity">
    <text evidence="1">Belongs to the universal ribosomal protein uS3 family.</text>
</comment>
<feature type="chain" id="PRO_1000086173" description="Small ribosomal subunit protein uS3">
    <location>
        <begin position="1"/>
        <end position="232"/>
    </location>
</feature>
<feature type="domain" description="KH type-2" evidence="1">
    <location>
        <begin position="39"/>
        <end position="107"/>
    </location>
</feature>
<keyword id="KW-0687">Ribonucleoprotein</keyword>
<keyword id="KW-0689">Ribosomal protein</keyword>
<keyword id="KW-0694">RNA-binding</keyword>
<keyword id="KW-0699">rRNA-binding</keyword>
<sequence>MGQKVHPNGIRLGIVKAWNSTWYANTKEFADNLDSDFKVRQFLTKELAKASVSRIVIERPAKSIRVTIHTARPGIVIGKKGEDVEKLRKVVADIAGVPAQINIAEVRKPELDAKLVADSITSQLERRVMFRRAMKRAVQNAMRLGAKGIKVEVSGRLGGAEIARTEWYREGRVPLHTLRADIDYNTSEAHTTYGVIGVKVWIFKGEILGGMAAVEQPEPAAQPKKQQRKGRK</sequence>
<name>RS3_YERP3</name>
<reference key="1">
    <citation type="journal article" date="2007" name="PLoS Genet.">
        <title>The complete genome sequence of Yersinia pseudotuberculosis IP31758, the causative agent of Far East scarlet-like fever.</title>
        <authorList>
            <person name="Eppinger M."/>
            <person name="Rosovitz M.J."/>
            <person name="Fricke W.F."/>
            <person name="Rasko D.A."/>
            <person name="Kokorina G."/>
            <person name="Fayolle C."/>
            <person name="Lindler L.E."/>
            <person name="Carniel E."/>
            <person name="Ravel J."/>
        </authorList>
    </citation>
    <scope>NUCLEOTIDE SEQUENCE [LARGE SCALE GENOMIC DNA]</scope>
    <source>
        <strain>IP 31758</strain>
    </source>
</reference>